<evidence type="ECO:0000250" key="1"/>
<evidence type="ECO:0000250" key="2">
    <source>
        <dbReference type="UniProtKB" id="Q01721"/>
    </source>
</evidence>
<evidence type="ECO:0000255" key="3"/>
<evidence type="ECO:0000256" key="4">
    <source>
        <dbReference type="SAM" id="MobiDB-lite"/>
    </source>
</evidence>
<evidence type="ECO:0000269" key="5">
    <source>
    </source>
</evidence>
<evidence type="ECO:0000305" key="6"/>
<name>GAS1_HUMAN</name>
<feature type="signal peptide" evidence="3">
    <location>
        <begin position="1"/>
        <end position="39"/>
    </location>
</feature>
<feature type="chain" id="PRO_0000021318" description="Growth arrest-specific protein 1">
    <location>
        <begin position="40"/>
        <end position="318"/>
    </location>
</feature>
<feature type="propeptide" id="PRO_0000021319" description="Removed in mature form" evidence="3">
    <location>
        <begin position="319"/>
        <end position="345"/>
    </location>
</feature>
<feature type="region of interest" description="Disordered" evidence="4">
    <location>
        <begin position="254"/>
        <end position="328"/>
    </location>
</feature>
<feature type="compositionally biased region" description="Acidic residues" evidence="4">
    <location>
        <begin position="260"/>
        <end position="271"/>
    </location>
</feature>
<feature type="lipid moiety-binding region" description="GPI-anchor amidated serine" evidence="3">
    <location>
        <position position="318"/>
    </location>
</feature>
<feature type="glycosylation site" description="N-linked (GlcNAc...) asparagine" evidence="3">
    <location>
        <position position="117"/>
    </location>
</feature>
<feature type="sequence conflict" description="In Ref. 1; AAA72368." evidence="6" ref="1">
    <original>A</original>
    <variation>V</variation>
    <location>
        <position position="216"/>
    </location>
</feature>
<protein>
    <recommendedName>
        <fullName>Growth arrest-specific protein 1</fullName>
        <shortName>GAS-1</shortName>
    </recommendedName>
</protein>
<gene>
    <name type="primary">GAS1</name>
</gene>
<keyword id="KW-0002">3D-structure</keyword>
<keyword id="KW-0131">Cell cycle</keyword>
<keyword id="KW-1003">Cell membrane</keyword>
<keyword id="KW-0325">Glycoprotein</keyword>
<keyword id="KW-0336">GPI-anchor</keyword>
<keyword id="KW-0338">Growth arrest</keyword>
<keyword id="KW-0449">Lipoprotein</keyword>
<keyword id="KW-0472">Membrane</keyword>
<keyword id="KW-1267">Proteomics identification</keyword>
<keyword id="KW-1185">Reference proteome</keyword>
<keyword id="KW-0732">Signal</keyword>
<sequence length="345" mass="35693">MVAALLGGGGEARGGTVPGAWLCLMALLQLLGSAPRGSGLAHGRRLICWQALLQCQGEPECSYAYNQYAEACAPVLAQHGGGDAPGAAAAAFPASAASFSSRWRCPSHCISALIQLNHTRRGPALEDCDCAQDENCKSTKRAIEPCLPRTSGGGAGGPGAGGVMGCTEARRRCDRDSRCNLALSRYLTYCGKVFNGLRCTDECRTVIEDMLAMPKAALLNDCVCDGLERPICESVKENMARLCFGAELGNGPGSSGSDGGLDDYYDEDYDDEQRTGGAGGEQPLDDDDGVPHPPRPGSGAAASGGRGDLPYGPGRRSSGGGGRLAPRGAWTPLASILLLLLGPLF</sequence>
<dbReference type="EMBL" id="L13698">
    <property type="protein sequence ID" value="AAA72368.1"/>
    <property type="molecule type" value="mRNA"/>
</dbReference>
<dbReference type="EMBL" id="AL158149">
    <property type="status" value="NOT_ANNOTATED_CDS"/>
    <property type="molecule type" value="Genomic_DNA"/>
</dbReference>
<dbReference type="EMBL" id="BC074908">
    <property type="protein sequence ID" value="AAH74908.1"/>
    <property type="molecule type" value="mRNA"/>
</dbReference>
<dbReference type="EMBL" id="BC074809">
    <property type="protein sequence ID" value="AAH74809.1"/>
    <property type="molecule type" value="mRNA"/>
</dbReference>
<dbReference type="EMBL" id="BC132682">
    <property type="protein sequence ID" value="AAI32683.1"/>
    <property type="molecule type" value="mRNA"/>
</dbReference>
<dbReference type="EMBL" id="BC136586">
    <property type="protein sequence ID" value="AAI36587.1"/>
    <property type="molecule type" value="mRNA"/>
</dbReference>
<dbReference type="CCDS" id="CCDS6674.1"/>
<dbReference type="PIR" id="A53138">
    <property type="entry name" value="A53138"/>
</dbReference>
<dbReference type="RefSeq" id="NP_002039.2">
    <property type="nucleotide sequence ID" value="NM_002048.3"/>
</dbReference>
<dbReference type="PDB" id="7RHQ">
    <property type="method" value="EM"/>
    <property type="resolution" value="3.53 A"/>
    <property type="chains" value="G=40-317"/>
</dbReference>
<dbReference type="PDBsum" id="7RHQ"/>
<dbReference type="EMDB" id="EMD-24466"/>
<dbReference type="SMR" id="P54826"/>
<dbReference type="BioGRID" id="108889">
    <property type="interactions" value="15"/>
</dbReference>
<dbReference type="FunCoup" id="P54826">
    <property type="interactions" value="698"/>
</dbReference>
<dbReference type="IntAct" id="P54826">
    <property type="interactions" value="3"/>
</dbReference>
<dbReference type="MINT" id="P54826"/>
<dbReference type="STRING" id="9606.ENSP00000298743"/>
<dbReference type="GlyCosmos" id="P54826">
    <property type="glycosylation" value="1 site, No reported glycans"/>
</dbReference>
<dbReference type="GlyGen" id="P54826">
    <property type="glycosylation" value="2 sites, 1 N-linked glycan (1 site)"/>
</dbReference>
<dbReference type="iPTMnet" id="P54826"/>
<dbReference type="PhosphoSitePlus" id="P54826"/>
<dbReference type="SwissPalm" id="P54826"/>
<dbReference type="BioMuta" id="GAS1"/>
<dbReference type="DMDM" id="218512049"/>
<dbReference type="jPOST" id="P54826"/>
<dbReference type="MassIVE" id="P54826"/>
<dbReference type="PaxDb" id="9606-ENSP00000298743"/>
<dbReference type="PeptideAtlas" id="P54826"/>
<dbReference type="ProteomicsDB" id="56734"/>
<dbReference type="Pumba" id="P54826"/>
<dbReference type="Antibodypedia" id="13350">
    <property type="antibodies" value="241 antibodies from 31 providers"/>
</dbReference>
<dbReference type="DNASU" id="2619"/>
<dbReference type="Ensembl" id="ENST00000298743.9">
    <property type="protein sequence ID" value="ENSP00000298743.7"/>
    <property type="gene ID" value="ENSG00000180447.7"/>
</dbReference>
<dbReference type="GeneID" id="2619"/>
<dbReference type="KEGG" id="hsa:2619"/>
<dbReference type="MANE-Select" id="ENST00000298743.9">
    <property type="protein sequence ID" value="ENSP00000298743.7"/>
    <property type="RefSeq nucleotide sequence ID" value="NM_002048.3"/>
    <property type="RefSeq protein sequence ID" value="NP_002039.2"/>
</dbReference>
<dbReference type="UCSC" id="uc004aox.5">
    <property type="organism name" value="human"/>
</dbReference>
<dbReference type="AGR" id="HGNC:4165"/>
<dbReference type="CTD" id="2619"/>
<dbReference type="DisGeNET" id="2619"/>
<dbReference type="GeneCards" id="GAS1"/>
<dbReference type="GeneReviews" id="GAS1"/>
<dbReference type="HGNC" id="HGNC:4165">
    <property type="gene designation" value="GAS1"/>
</dbReference>
<dbReference type="HPA" id="ENSG00000180447">
    <property type="expression patterns" value="Tissue enhanced (endometrium)"/>
</dbReference>
<dbReference type="MalaCards" id="GAS1"/>
<dbReference type="MIM" id="139185">
    <property type="type" value="gene"/>
</dbReference>
<dbReference type="neXtProt" id="NX_P54826"/>
<dbReference type="OpenTargets" id="ENSG00000180447"/>
<dbReference type="Orphanet" id="93925">
    <property type="disease" value="Alobar holoprosencephaly"/>
</dbReference>
<dbReference type="Orphanet" id="93924">
    <property type="disease" value="Lobar holoprosencephaly"/>
</dbReference>
<dbReference type="Orphanet" id="280200">
    <property type="disease" value="Microform holoprosencephaly"/>
</dbReference>
<dbReference type="Orphanet" id="93926">
    <property type="disease" value="Midline interhemispheric variant of holoprosencephaly"/>
</dbReference>
<dbReference type="Orphanet" id="220386">
    <property type="disease" value="Semilobar holoprosencephaly"/>
</dbReference>
<dbReference type="Orphanet" id="280195">
    <property type="disease" value="Septopreoptic holoprosencephaly"/>
</dbReference>
<dbReference type="PharmGKB" id="PA28578"/>
<dbReference type="VEuPathDB" id="HostDB:ENSG00000180447"/>
<dbReference type="eggNOG" id="ENOG502QSF7">
    <property type="taxonomic scope" value="Eukaryota"/>
</dbReference>
<dbReference type="GeneTree" id="ENSGT00390000001195"/>
<dbReference type="HOGENOM" id="CLU_068697_1_0_1"/>
<dbReference type="InParanoid" id="P54826"/>
<dbReference type="OMA" id="AMLQCQE"/>
<dbReference type="OrthoDB" id="5950623at2759"/>
<dbReference type="PAN-GO" id="P54826">
    <property type="GO annotations" value="2 GO annotations based on evolutionary models"/>
</dbReference>
<dbReference type="PhylomeDB" id="P54826"/>
<dbReference type="TreeFam" id="TF329660"/>
<dbReference type="PathwayCommons" id="P54826"/>
<dbReference type="Reactome" id="R-HSA-5632681">
    <property type="pathway name" value="Ligand-receptor interactions"/>
</dbReference>
<dbReference type="Reactome" id="R-HSA-5635838">
    <property type="pathway name" value="Activation of SMO"/>
</dbReference>
<dbReference type="SignaLink" id="P54826"/>
<dbReference type="SIGNOR" id="P54826"/>
<dbReference type="BioGRID-ORCS" id="2619">
    <property type="hits" value="17 hits in 1151 CRISPR screens"/>
</dbReference>
<dbReference type="ChiTaRS" id="GAS1">
    <property type="organism name" value="human"/>
</dbReference>
<dbReference type="GeneWiki" id="GAS1"/>
<dbReference type="GenomeRNAi" id="2619"/>
<dbReference type="Pharos" id="P54826">
    <property type="development level" value="Tbio"/>
</dbReference>
<dbReference type="PRO" id="PR:P54826"/>
<dbReference type="Proteomes" id="UP000005640">
    <property type="component" value="Chromosome 9"/>
</dbReference>
<dbReference type="RNAct" id="P54826">
    <property type="molecule type" value="protein"/>
</dbReference>
<dbReference type="Bgee" id="ENSG00000180447">
    <property type="expression patterns" value="Expressed in germinal epithelium of ovary and 197 other cell types or tissues"/>
</dbReference>
<dbReference type="GO" id="GO:0016020">
    <property type="term" value="C:membrane"/>
    <property type="evidence" value="ECO:0000303"/>
    <property type="project" value="UniProtKB"/>
</dbReference>
<dbReference type="GO" id="GO:0005886">
    <property type="term" value="C:plasma membrane"/>
    <property type="evidence" value="ECO:0000314"/>
    <property type="project" value="UniProtKB"/>
</dbReference>
<dbReference type="GO" id="GO:0098552">
    <property type="term" value="C:side of membrane"/>
    <property type="evidence" value="ECO:0007669"/>
    <property type="project" value="UniProtKB-KW"/>
</dbReference>
<dbReference type="GO" id="GO:0008142">
    <property type="term" value="F:oxysterol binding"/>
    <property type="evidence" value="ECO:0000250"/>
    <property type="project" value="UniProtKB"/>
</dbReference>
<dbReference type="GO" id="GO:0045165">
    <property type="term" value="P:cell fate commitment"/>
    <property type="evidence" value="ECO:0000250"/>
    <property type="project" value="UniProtKB"/>
</dbReference>
<dbReference type="GO" id="GO:0035924">
    <property type="term" value="P:cellular response to vascular endothelial growth factor stimulus"/>
    <property type="evidence" value="ECO:0000270"/>
    <property type="project" value="UniProtKB"/>
</dbReference>
<dbReference type="GO" id="GO:0048589">
    <property type="term" value="P:developmental growth"/>
    <property type="evidence" value="ECO:0000250"/>
    <property type="project" value="UniProtKB"/>
</dbReference>
<dbReference type="GO" id="GO:0045930">
    <property type="term" value="P:negative regulation of mitotic cell cycle"/>
    <property type="evidence" value="ECO:0000314"/>
    <property type="project" value="UniProtKB"/>
</dbReference>
<dbReference type="GO" id="GO:0010955">
    <property type="term" value="P:negative regulation of protein processing"/>
    <property type="evidence" value="ECO:0000315"/>
    <property type="project" value="UniProtKB"/>
</dbReference>
<dbReference type="GO" id="GO:0042981">
    <property type="term" value="P:regulation of apoptotic process"/>
    <property type="evidence" value="ECO:0000250"/>
    <property type="project" value="UniProtKB"/>
</dbReference>
<dbReference type="GO" id="GO:0060628">
    <property type="term" value="P:regulation of ER to Golgi vesicle-mediated transport"/>
    <property type="evidence" value="ECO:0000315"/>
    <property type="project" value="UniProtKB"/>
</dbReference>
<dbReference type="GO" id="GO:0008589">
    <property type="term" value="P:regulation of smoothened signaling pathway"/>
    <property type="evidence" value="ECO:0000250"/>
    <property type="project" value="UniProtKB"/>
</dbReference>
<dbReference type="InterPro" id="IPR039596">
    <property type="entry name" value="GAS1"/>
</dbReference>
<dbReference type="InterPro" id="IPR016017">
    <property type="entry name" value="GDNF/GAS1"/>
</dbReference>
<dbReference type="PANTHER" id="PTHR16840">
    <property type="entry name" value="GROWTH ARREST-SPECIFIC PROTEIN 1"/>
    <property type="match status" value="1"/>
</dbReference>
<dbReference type="PANTHER" id="PTHR16840:SF3">
    <property type="entry name" value="GROWTH ARREST-SPECIFIC PROTEIN 1"/>
    <property type="match status" value="1"/>
</dbReference>
<dbReference type="Pfam" id="PF02351">
    <property type="entry name" value="GDNF"/>
    <property type="match status" value="1"/>
</dbReference>
<dbReference type="SMART" id="SM00907">
    <property type="entry name" value="GDNF"/>
    <property type="match status" value="2"/>
</dbReference>
<comment type="function">
    <text evidence="2 5">Specific growth arrest protein involved in growth suppression. Blocks entry to S phase. Prevents cycling of normal and transformed cells. Binds 20(S)-hydroxycholesterol (20(S)-OHC) (By similarity).</text>
</comment>
<comment type="subcellular location">
    <subcellularLocation>
        <location evidence="1">Cell membrane</location>
        <topology evidence="1">Lipid-anchor</topology>
        <topology evidence="1">GPI-anchor</topology>
    </subcellularLocation>
</comment>
<reference key="1">
    <citation type="journal article" date="1994" name="Proc. Natl. Acad. Sci. U.S.A.">
        <title>Structure, function, and chromosome mapping of the growth-suppressing human homologue of the murine gas1 gene.</title>
        <authorList>
            <person name="del Sal G."/>
            <person name="Collavin L."/>
            <person name="Ruaro M.E."/>
            <person name="Edomi P."/>
            <person name="Saccone S."/>
            <person name="Valle G.D."/>
            <person name="Schneider C."/>
        </authorList>
    </citation>
    <scope>NUCLEOTIDE SEQUENCE [MRNA]</scope>
    <scope>FUNCTION</scope>
    <source>
        <tissue>Liver</tissue>
    </source>
</reference>
<reference key="2">
    <citation type="journal article" date="2004" name="Nature">
        <title>DNA sequence and analysis of human chromosome 9.</title>
        <authorList>
            <person name="Humphray S.J."/>
            <person name="Oliver K."/>
            <person name="Hunt A.R."/>
            <person name="Plumb R.W."/>
            <person name="Loveland J.E."/>
            <person name="Howe K.L."/>
            <person name="Andrews T.D."/>
            <person name="Searle S."/>
            <person name="Hunt S.E."/>
            <person name="Scott C.E."/>
            <person name="Jones M.C."/>
            <person name="Ainscough R."/>
            <person name="Almeida J.P."/>
            <person name="Ambrose K.D."/>
            <person name="Ashwell R.I.S."/>
            <person name="Babbage A.K."/>
            <person name="Babbage S."/>
            <person name="Bagguley C.L."/>
            <person name="Bailey J."/>
            <person name="Banerjee R."/>
            <person name="Barker D.J."/>
            <person name="Barlow K.F."/>
            <person name="Bates K."/>
            <person name="Beasley H."/>
            <person name="Beasley O."/>
            <person name="Bird C.P."/>
            <person name="Bray-Allen S."/>
            <person name="Brown A.J."/>
            <person name="Brown J.Y."/>
            <person name="Burford D."/>
            <person name="Burrill W."/>
            <person name="Burton J."/>
            <person name="Carder C."/>
            <person name="Carter N.P."/>
            <person name="Chapman J.C."/>
            <person name="Chen Y."/>
            <person name="Clarke G."/>
            <person name="Clark S.Y."/>
            <person name="Clee C.M."/>
            <person name="Clegg S."/>
            <person name="Collier R.E."/>
            <person name="Corby N."/>
            <person name="Crosier M."/>
            <person name="Cummings A.T."/>
            <person name="Davies J."/>
            <person name="Dhami P."/>
            <person name="Dunn M."/>
            <person name="Dutta I."/>
            <person name="Dyer L.W."/>
            <person name="Earthrowl M.E."/>
            <person name="Faulkner L."/>
            <person name="Fleming C.J."/>
            <person name="Frankish A."/>
            <person name="Frankland J.A."/>
            <person name="French L."/>
            <person name="Fricker D.G."/>
            <person name="Garner P."/>
            <person name="Garnett J."/>
            <person name="Ghori J."/>
            <person name="Gilbert J.G.R."/>
            <person name="Glison C."/>
            <person name="Grafham D.V."/>
            <person name="Gribble S."/>
            <person name="Griffiths C."/>
            <person name="Griffiths-Jones S."/>
            <person name="Grocock R."/>
            <person name="Guy J."/>
            <person name="Hall R.E."/>
            <person name="Hammond S."/>
            <person name="Harley J.L."/>
            <person name="Harrison E.S.I."/>
            <person name="Hart E.A."/>
            <person name="Heath P.D."/>
            <person name="Henderson C.D."/>
            <person name="Hopkins B.L."/>
            <person name="Howard P.J."/>
            <person name="Howden P.J."/>
            <person name="Huckle E."/>
            <person name="Johnson C."/>
            <person name="Johnson D."/>
            <person name="Joy A.A."/>
            <person name="Kay M."/>
            <person name="Keenan S."/>
            <person name="Kershaw J.K."/>
            <person name="Kimberley A.M."/>
            <person name="King A."/>
            <person name="Knights A."/>
            <person name="Laird G.K."/>
            <person name="Langford C."/>
            <person name="Lawlor S."/>
            <person name="Leongamornlert D.A."/>
            <person name="Leversha M."/>
            <person name="Lloyd C."/>
            <person name="Lloyd D.M."/>
            <person name="Lovell J."/>
            <person name="Martin S."/>
            <person name="Mashreghi-Mohammadi M."/>
            <person name="Matthews L."/>
            <person name="McLaren S."/>
            <person name="McLay K.E."/>
            <person name="McMurray A."/>
            <person name="Milne S."/>
            <person name="Nickerson T."/>
            <person name="Nisbett J."/>
            <person name="Nordsiek G."/>
            <person name="Pearce A.V."/>
            <person name="Peck A.I."/>
            <person name="Porter K.M."/>
            <person name="Pandian R."/>
            <person name="Pelan S."/>
            <person name="Phillimore B."/>
            <person name="Povey S."/>
            <person name="Ramsey Y."/>
            <person name="Rand V."/>
            <person name="Scharfe M."/>
            <person name="Sehra H.K."/>
            <person name="Shownkeen R."/>
            <person name="Sims S.K."/>
            <person name="Skuce C.D."/>
            <person name="Smith M."/>
            <person name="Steward C.A."/>
            <person name="Swarbreck D."/>
            <person name="Sycamore N."/>
            <person name="Tester J."/>
            <person name="Thorpe A."/>
            <person name="Tracey A."/>
            <person name="Tromans A."/>
            <person name="Thomas D.W."/>
            <person name="Wall M."/>
            <person name="Wallis J.M."/>
            <person name="West A.P."/>
            <person name="Whitehead S.L."/>
            <person name="Willey D.L."/>
            <person name="Williams S.A."/>
            <person name="Wilming L."/>
            <person name="Wray P.W."/>
            <person name="Young L."/>
            <person name="Ashurst J.L."/>
            <person name="Coulson A."/>
            <person name="Blocker H."/>
            <person name="Durbin R.M."/>
            <person name="Sulston J.E."/>
            <person name="Hubbard T."/>
            <person name="Jackson M.J."/>
            <person name="Bentley D.R."/>
            <person name="Beck S."/>
            <person name="Rogers J."/>
            <person name="Dunham I."/>
        </authorList>
    </citation>
    <scope>NUCLEOTIDE SEQUENCE [LARGE SCALE GENOMIC DNA]</scope>
</reference>
<reference key="3">
    <citation type="journal article" date="2004" name="Genome Res.">
        <title>The status, quality, and expansion of the NIH full-length cDNA project: the Mammalian Gene Collection (MGC).</title>
        <authorList>
            <consortium name="The MGC Project Team"/>
        </authorList>
    </citation>
    <scope>NUCLEOTIDE SEQUENCE [LARGE SCALE MRNA]</scope>
    <source>
        <tissue>Testis</tissue>
    </source>
</reference>
<accession>P54826</accession>
<accession>B9EGM4</accession>
<accession>Q6B086</accession>
<organism>
    <name type="scientific">Homo sapiens</name>
    <name type="common">Human</name>
    <dbReference type="NCBI Taxonomy" id="9606"/>
    <lineage>
        <taxon>Eukaryota</taxon>
        <taxon>Metazoa</taxon>
        <taxon>Chordata</taxon>
        <taxon>Craniata</taxon>
        <taxon>Vertebrata</taxon>
        <taxon>Euteleostomi</taxon>
        <taxon>Mammalia</taxon>
        <taxon>Eutheria</taxon>
        <taxon>Euarchontoglires</taxon>
        <taxon>Primates</taxon>
        <taxon>Haplorrhini</taxon>
        <taxon>Catarrhini</taxon>
        <taxon>Hominidae</taxon>
        <taxon>Homo</taxon>
    </lineage>
</organism>
<proteinExistence type="evidence at protein level"/>